<sequence>MTEQNRILCRELSLLAFNRRVLAQAEDKNVPLLERLRFLCIVSSNLDEFFEVRMAWLKRENKLHPRRRPDNGKMPSETIADVTEAARSLIRHQYDLFNNVLQPELARESIHFYRRRNWTGTQKKWIEDYFDRELLPILTPIGLDPSHPFPRPLNKSLNFAVELDGTDAFGRPSGMAIVQAPRILPRVVPLPSELCGGGHGFVFLSSILHAHVGKLFPGMNVKGCHQFRLTRDSDLTVDEEDVQNLRAAIQNELHDREYGDGVRLEVADTCPAYIRDFLLAQFRLTDAELYQVKGPVNLVRLNAVPDLVNRPDLKFPPHTPGRLKALGKNSPIFDLVRQSPILLHHPYQSFDPVVDMIREAAADPAVLAVKMTIYRTGTRSELVPALMKAALADKQVTVVVELMARFDEANNVNWAKQLEEAGAHVVYGVFGYKVHAKMALVIRREDGVLKRYAHLGTGNYHQGTSRIYTDFGLITADEQITADVNTLFMEITGLGKPGRLNKLYQSPFTLHKMVIGRIARETEHAKAGKPARITAKMNSLIEPTVIEALYRASAAGVQIDLIVRGMCTLRPGVKGLSENIRVRSIVGRQLEHARVYCFHNNGADDTFISSADWMGRNFFRRIETATPITAPELKKRVIREGLEMALADNTHAWLMQPDGGYIRAAPAEGESEADLQNDLWDLLRG</sequence>
<protein>
    <recommendedName>
        <fullName evidence="1">Polyphosphate kinase</fullName>
        <ecNumber evidence="1">2.7.4.1</ecNumber>
    </recommendedName>
    <alternativeName>
        <fullName evidence="1">ATP-polyphosphate phosphotransferase</fullName>
    </alternativeName>
    <alternativeName>
        <fullName evidence="1">Polyphosphoric acid kinase</fullName>
    </alternativeName>
</protein>
<gene>
    <name evidence="1" type="primary">ppk</name>
    <name type="ordered locus">NGO_0003</name>
</gene>
<accession>Q5FAJ0</accession>
<reference key="1">
    <citation type="submission" date="2003-03" db="EMBL/GenBank/DDBJ databases">
        <title>The complete genome sequence of Neisseria gonorrhoeae.</title>
        <authorList>
            <person name="Lewis L.A."/>
            <person name="Gillaspy A.F."/>
            <person name="McLaughlin R.E."/>
            <person name="Gipson M."/>
            <person name="Ducey T.F."/>
            <person name="Ownbey T."/>
            <person name="Hartman K."/>
            <person name="Nydick C."/>
            <person name="Carson M.B."/>
            <person name="Vaughn J."/>
            <person name="Thomson C."/>
            <person name="Song L."/>
            <person name="Lin S."/>
            <person name="Yuan X."/>
            <person name="Najar F."/>
            <person name="Zhan M."/>
            <person name="Ren Q."/>
            <person name="Zhu H."/>
            <person name="Qi S."/>
            <person name="Kenton S.M."/>
            <person name="Lai H."/>
            <person name="White J.D."/>
            <person name="Clifton S."/>
            <person name="Roe B.A."/>
            <person name="Dyer D.W."/>
        </authorList>
    </citation>
    <scope>NUCLEOTIDE SEQUENCE [LARGE SCALE GENOMIC DNA]</scope>
    <source>
        <strain>ATCC 700825 / FA 1090</strain>
    </source>
</reference>
<evidence type="ECO:0000255" key="1">
    <source>
        <dbReference type="HAMAP-Rule" id="MF_00347"/>
    </source>
</evidence>
<comment type="function">
    <text evidence="1">Catalyzes the reversible transfer of the terminal phosphate of ATP to form a long-chain polyphosphate (polyP).</text>
</comment>
<comment type="catalytic activity">
    <reaction evidence="1">
        <text>[phosphate](n) + ATP = [phosphate](n+1) + ADP</text>
        <dbReference type="Rhea" id="RHEA:19573"/>
        <dbReference type="Rhea" id="RHEA-COMP:9859"/>
        <dbReference type="Rhea" id="RHEA-COMP:14280"/>
        <dbReference type="ChEBI" id="CHEBI:16838"/>
        <dbReference type="ChEBI" id="CHEBI:30616"/>
        <dbReference type="ChEBI" id="CHEBI:456216"/>
        <dbReference type="EC" id="2.7.4.1"/>
    </reaction>
</comment>
<comment type="cofactor">
    <cofactor evidence="1">
        <name>Mg(2+)</name>
        <dbReference type="ChEBI" id="CHEBI:18420"/>
    </cofactor>
</comment>
<comment type="PTM">
    <text evidence="1">An intermediate of this reaction is the autophosphorylated ppk in which a phosphate is covalently linked to a histidine residue through a N-P bond.</text>
</comment>
<comment type="similarity">
    <text evidence="1">Belongs to the polyphosphate kinase 1 (PPK1) family.</text>
</comment>
<dbReference type="EC" id="2.7.4.1" evidence="1"/>
<dbReference type="EMBL" id="AE004969">
    <property type="protein sequence ID" value="AAW88776.1"/>
    <property type="molecule type" value="Genomic_DNA"/>
</dbReference>
<dbReference type="RefSeq" id="WP_010950968.1">
    <property type="nucleotide sequence ID" value="NC_002946.2"/>
</dbReference>
<dbReference type="RefSeq" id="YP_207188.1">
    <property type="nucleotide sequence ID" value="NC_002946.2"/>
</dbReference>
<dbReference type="SMR" id="Q5FAJ0"/>
<dbReference type="STRING" id="242231.NGO_0003"/>
<dbReference type="KEGG" id="ngo:NGO_0003"/>
<dbReference type="PATRIC" id="fig|242231.10.peg.3"/>
<dbReference type="HOGENOM" id="CLU_009678_5_0_4"/>
<dbReference type="Proteomes" id="UP000000535">
    <property type="component" value="Chromosome"/>
</dbReference>
<dbReference type="GO" id="GO:0009358">
    <property type="term" value="C:polyphosphate kinase complex"/>
    <property type="evidence" value="ECO:0007669"/>
    <property type="project" value="InterPro"/>
</dbReference>
<dbReference type="GO" id="GO:0005524">
    <property type="term" value="F:ATP binding"/>
    <property type="evidence" value="ECO:0007669"/>
    <property type="project" value="UniProtKB-KW"/>
</dbReference>
<dbReference type="GO" id="GO:0046872">
    <property type="term" value="F:metal ion binding"/>
    <property type="evidence" value="ECO:0007669"/>
    <property type="project" value="UniProtKB-KW"/>
</dbReference>
<dbReference type="GO" id="GO:0008976">
    <property type="term" value="F:polyphosphate kinase activity"/>
    <property type="evidence" value="ECO:0007669"/>
    <property type="project" value="UniProtKB-UniRule"/>
</dbReference>
<dbReference type="GO" id="GO:0006799">
    <property type="term" value="P:polyphosphate biosynthetic process"/>
    <property type="evidence" value="ECO:0007669"/>
    <property type="project" value="UniProtKB-UniRule"/>
</dbReference>
<dbReference type="CDD" id="cd09165">
    <property type="entry name" value="PLDc_PaPPK1_C1_like"/>
    <property type="match status" value="1"/>
</dbReference>
<dbReference type="CDD" id="cd09168">
    <property type="entry name" value="PLDc_PaPPK1_C2_like"/>
    <property type="match status" value="1"/>
</dbReference>
<dbReference type="Gene3D" id="3.30.870.10">
    <property type="entry name" value="Endonuclease Chain A"/>
    <property type="match status" value="2"/>
</dbReference>
<dbReference type="Gene3D" id="3.30.1840.10">
    <property type="entry name" value="Polyphosphate kinase middle domain"/>
    <property type="match status" value="1"/>
</dbReference>
<dbReference type="Gene3D" id="1.20.58.310">
    <property type="entry name" value="Polyphosphate kinase N-terminal domain"/>
    <property type="match status" value="1"/>
</dbReference>
<dbReference type="HAMAP" id="MF_00347">
    <property type="entry name" value="Polyphosphate_kinase"/>
    <property type="match status" value="1"/>
</dbReference>
<dbReference type="InterPro" id="IPR003414">
    <property type="entry name" value="PP_kinase"/>
</dbReference>
<dbReference type="InterPro" id="IPR041108">
    <property type="entry name" value="PP_kinase_C_1"/>
</dbReference>
<dbReference type="InterPro" id="IPR024953">
    <property type="entry name" value="PP_kinase_middle"/>
</dbReference>
<dbReference type="InterPro" id="IPR036830">
    <property type="entry name" value="PP_kinase_middle_dom_sf"/>
</dbReference>
<dbReference type="InterPro" id="IPR025200">
    <property type="entry name" value="PPK_C_dom2"/>
</dbReference>
<dbReference type="InterPro" id="IPR025198">
    <property type="entry name" value="PPK_N_dom"/>
</dbReference>
<dbReference type="InterPro" id="IPR036832">
    <property type="entry name" value="PPK_N_dom_sf"/>
</dbReference>
<dbReference type="NCBIfam" id="TIGR03705">
    <property type="entry name" value="poly_P_kin"/>
    <property type="match status" value="1"/>
</dbReference>
<dbReference type="NCBIfam" id="NF003917">
    <property type="entry name" value="PRK05443.1-1"/>
    <property type="match status" value="1"/>
</dbReference>
<dbReference type="NCBIfam" id="NF003918">
    <property type="entry name" value="PRK05443.1-2"/>
    <property type="match status" value="1"/>
</dbReference>
<dbReference type="NCBIfam" id="NF003921">
    <property type="entry name" value="PRK05443.2-2"/>
    <property type="match status" value="1"/>
</dbReference>
<dbReference type="PANTHER" id="PTHR30218">
    <property type="entry name" value="POLYPHOSPHATE KINASE"/>
    <property type="match status" value="1"/>
</dbReference>
<dbReference type="PANTHER" id="PTHR30218:SF0">
    <property type="entry name" value="POLYPHOSPHATE KINASE"/>
    <property type="match status" value="1"/>
</dbReference>
<dbReference type="Pfam" id="PF02503">
    <property type="entry name" value="PP_kinase"/>
    <property type="match status" value="1"/>
</dbReference>
<dbReference type="Pfam" id="PF13090">
    <property type="entry name" value="PP_kinase_C"/>
    <property type="match status" value="1"/>
</dbReference>
<dbReference type="Pfam" id="PF17941">
    <property type="entry name" value="PP_kinase_C_1"/>
    <property type="match status" value="1"/>
</dbReference>
<dbReference type="Pfam" id="PF13089">
    <property type="entry name" value="PP_kinase_N"/>
    <property type="match status" value="1"/>
</dbReference>
<dbReference type="PIRSF" id="PIRSF015589">
    <property type="entry name" value="PP_kinase"/>
    <property type="match status" value="1"/>
</dbReference>
<dbReference type="SUPFAM" id="SSF56024">
    <property type="entry name" value="Phospholipase D/nuclease"/>
    <property type="match status" value="2"/>
</dbReference>
<dbReference type="SUPFAM" id="SSF143724">
    <property type="entry name" value="PHP14-like"/>
    <property type="match status" value="1"/>
</dbReference>
<dbReference type="SUPFAM" id="SSF140356">
    <property type="entry name" value="PPK N-terminal domain-like"/>
    <property type="match status" value="1"/>
</dbReference>
<proteinExistence type="inferred from homology"/>
<feature type="chain" id="PRO_1000079369" description="Polyphosphate kinase">
    <location>
        <begin position="1"/>
        <end position="685"/>
    </location>
</feature>
<feature type="active site" description="Phosphohistidine intermediate" evidence="1">
    <location>
        <position position="435"/>
    </location>
</feature>
<feature type="binding site" evidence="1">
    <location>
        <position position="45"/>
    </location>
    <ligand>
        <name>ATP</name>
        <dbReference type="ChEBI" id="CHEBI:30616"/>
    </ligand>
</feature>
<feature type="binding site" evidence="1">
    <location>
        <position position="375"/>
    </location>
    <ligand>
        <name>Mg(2+)</name>
        <dbReference type="ChEBI" id="CHEBI:18420"/>
    </ligand>
</feature>
<feature type="binding site" evidence="1">
    <location>
        <position position="405"/>
    </location>
    <ligand>
        <name>Mg(2+)</name>
        <dbReference type="ChEBI" id="CHEBI:18420"/>
    </ligand>
</feature>
<feature type="binding site" evidence="1">
    <location>
        <position position="468"/>
    </location>
    <ligand>
        <name>ATP</name>
        <dbReference type="ChEBI" id="CHEBI:30616"/>
    </ligand>
</feature>
<feature type="binding site" evidence="1">
    <location>
        <position position="564"/>
    </location>
    <ligand>
        <name>ATP</name>
        <dbReference type="ChEBI" id="CHEBI:30616"/>
    </ligand>
</feature>
<feature type="binding site" evidence="1">
    <location>
        <position position="592"/>
    </location>
    <ligand>
        <name>ATP</name>
        <dbReference type="ChEBI" id="CHEBI:30616"/>
    </ligand>
</feature>
<organism>
    <name type="scientific">Neisseria gonorrhoeae (strain ATCC 700825 / FA 1090)</name>
    <dbReference type="NCBI Taxonomy" id="242231"/>
    <lineage>
        <taxon>Bacteria</taxon>
        <taxon>Pseudomonadati</taxon>
        <taxon>Pseudomonadota</taxon>
        <taxon>Betaproteobacteria</taxon>
        <taxon>Neisseriales</taxon>
        <taxon>Neisseriaceae</taxon>
        <taxon>Neisseria</taxon>
    </lineage>
</organism>
<keyword id="KW-0067">ATP-binding</keyword>
<keyword id="KW-0418">Kinase</keyword>
<keyword id="KW-0460">Magnesium</keyword>
<keyword id="KW-0479">Metal-binding</keyword>
<keyword id="KW-0547">Nucleotide-binding</keyword>
<keyword id="KW-0597">Phosphoprotein</keyword>
<keyword id="KW-1185">Reference proteome</keyword>
<keyword id="KW-0808">Transferase</keyword>
<name>PPK1_NEIG1</name>